<protein>
    <recommendedName>
        <fullName>3-isopropylmalate dehydrogenase</fullName>
        <shortName>3-IPM-DH</shortName>
        <shortName>IMDH</shortName>
        <ecNumber>1.1.1.85</ecNumber>
    </recommendedName>
    <alternativeName>
        <fullName>Beta-IPM dehydrogenase</fullName>
    </alternativeName>
</protein>
<name>LEU3_ZYGRC</name>
<organism>
    <name type="scientific">Zygosaccharomyces rouxii (strain ATCC 2623 / CBS 732 / NBRC 1130 / NCYC 568 / NRRL Y-229)</name>
    <dbReference type="NCBI Taxonomy" id="559307"/>
    <lineage>
        <taxon>Eukaryota</taxon>
        <taxon>Fungi</taxon>
        <taxon>Dikarya</taxon>
        <taxon>Ascomycota</taxon>
        <taxon>Saccharomycotina</taxon>
        <taxon>Saccharomycetes</taxon>
        <taxon>Saccharomycetales</taxon>
        <taxon>Saccharomycetaceae</taxon>
        <taxon>Zygosaccharomyces</taxon>
    </lineage>
</organism>
<keyword id="KW-0028">Amino-acid biosynthesis</keyword>
<keyword id="KW-0100">Branched-chain amino acid biosynthesis</keyword>
<keyword id="KW-0963">Cytoplasm</keyword>
<keyword id="KW-0432">Leucine biosynthesis</keyword>
<keyword id="KW-0460">Magnesium</keyword>
<keyword id="KW-0464">Manganese</keyword>
<keyword id="KW-0479">Metal-binding</keyword>
<keyword id="KW-0520">NAD</keyword>
<keyword id="KW-0560">Oxidoreductase</keyword>
<keyword id="KW-1185">Reference proteome</keyword>
<gene>
    <name type="primary">LEU2</name>
    <name type="ordered locus">ZYRO0E04796g</name>
</gene>
<accession>Q96WI0</accession>
<accession>B2G4C5</accession>
<accession>C5E4C4</accession>
<reference key="1">
    <citation type="journal article" date="2001" name="Yeast">
        <title>Molecular cloning and sequence analysis of the Zygosaccharomyces rouxii LEU2 gene encoding a beta-isopropylmalate dehydrogenase.</title>
        <authorList>
            <person name="Sychrova H."/>
        </authorList>
    </citation>
    <scope>NUCLEOTIDE SEQUENCE [GENOMIC DNA]</scope>
</reference>
<reference key="2">
    <citation type="submission" date="2008-02" db="EMBL/GenBank/DDBJ databases">
        <title>Zygosaccharomyces rouxii homologs of Saccharomyces cerevisiae chromosome III.</title>
        <authorList>
            <person name="Gordon J.L."/>
            <person name="Wolfe K.H."/>
        </authorList>
    </citation>
    <scope>NUCLEOTIDE SEQUENCE [LARGE SCALE GENOMIC DNA]</scope>
</reference>
<reference key="3">
    <citation type="journal article" date="2009" name="Genome Res.">
        <title>Comparative genomics of protoploid Saccharomycetaceae.</title>
        <authorList>
            <consortium name="The Genolevures Consortium"/>
            <person name="Souciet J.-L."/>
            <person name="Dujon B."/>
            <person name="Gaillardin C."/>
            <person name="Johnston M."/>
            <person name="Baret P.V."/>
            <person name="Cliften P."/>
            <person name="Sherman D.J."/>
            <person name="Weissenbach J."/>
            <person name="Westhof E."/>
            <person name="Wincker P."/>
            <person name="Jubin C."/>
            <person name="Poulain J."/>
            <person name="Barbe V."/>
            <person name="Segurens B."/>
            <person name="Artiguenave F."/>
            <person name="Anthouard V."/>
            <person name="Vacherie B."/>
            <person name="Val M.-E."/>
            <person name="Fulton R.S."/>
            <person name="Minx P."/>
            <person name="Wilson R."/>
            <person name="Durrens P."/>
            <person name="Jean G."/>
            <person name="Marck C."/>
            <person name="Martin T."/>
            <person name="Nikolski M."/>
            <person name="Rolland T."/>
            <person name="Seret M.-L."/>
            <person name="Casaregola S."/>
            <person name="Despons L."/>
            <person name="Fairhead C."/>
            <person name="Fischer G."/>
            <person name="Lafontaine I."/>
            <person name="Leh V."/>
            <person name="Lemaire M."/>
            <person name="de Montigny J."/>
            <person name="Neuveglise C."/>
            <person name="Thierry A."/>
            <person name="Blanc-Lenfle I."/>
            <person name="Bleykasten C."/>
            <person name="Diffels J."/>
            <person name="Fritsch E."/>
            <person name="Frangeul L."/>
            <person name="Goeffon A."/>
            <person name="Jauniaux N."/>
            <person name="Kachouri-Lafond R."/>
            <person name="Payen C."/>
            <person name="Potier S."/>
            <person name="Pribylova L."/>
            <person name="Ozanne C."/>
            <person name="Richard G.-F."/>
            <person name="Sacerdot C."/>
            <person name="Straub M.-L."/>
            <person name="Talla E."/>
        </authorList>
    </citation>
    <scope>NUCLEOTIDE SEQUENCE [LARGE SCALE GENOMIC DNA]</scope>
    <source>
        <strain>ATCC 2623 / CBS 732 / BCRC 21506 / NBRC 1130 / NCYC 568 / NRRL Y-229</strain>
    </source>
</reference>
<dbReference type="EC" id="1.1.1.85"/>
<dbReference type="EMBL" id="AF314095">
    <property type="protein sequence ID" value="AAK82822.1"/>
    <property type="molecule type" value="Genomic_DNA"/>
</dbReference>
<dbReference type="EMBL" id="AM989984">
    <property type="protein sequence ID" value="CAQ43434.1"/>
    <property type="molecule type" value="Genomic_DNA"/>
</dbReference>
<dbReference type="EMBL" id="CU928181">
    <property type="protein sequence ID" value="CAR30885.1"/>
    <property type="molecule type" value="Genomic_DNA"/>
</dbReference>
<dbReference type="RefSeq" id="XP_002499140.1">
    <property type="nucleotide sequence ID" value="XM_002499095.1"/>
</dbReference>
<dbReference type="SMR" id="Q96WI0"/>
<dbReference type="FunCoup" id="Q96WI0">
    <property type="interactions" value="1020"/>
</dbReference>
<dbReference type="STRING" id="559307.Q96WI0"/>
<dbReference type="GeneID" id="8204691"/>
<dbReference type="KEGG" id="zro:ZYRO0E04796g"/>
<dbReference type="HOGENOM" id="CLU_031953_0_3_1"/>
<dbReference type="InParanoid" id="Q96WI0"/>
<dbReference type="UniPathway" id="UPA00048">
    <property type="reaction ID" value="UER00072"/>
</dbReference>
<dbReference type="Proteomes" id="UP000008536">
    <property type="component" value="Chromosome E"/>
</dbReference>
<dbReference type="GO" id="GO:0005829">
    <property type="term" value="C:cytosol"/>
    <property type="evidence" value="ECO:0007669"/>
    <property type="project" value="TreeGrafter"/>
</dbReference>
<dbReference type="GO" id="GO:0003862">
    <property type="term" value="F:3-isopropylmalate dehydrogenase activity"/>
    <property type="evidence" value="ECO:0007669"/>
    <property type="project" value="UniProtKB-EC"/>
</dbReference>
<dbReference type="GO" id="GO:0000287">
    <property type="term" value="F:magnesium ion binding"/>
    <property type="evidence" value="ECO:0007669"/>
    <property type="project" value="InterPro"/>
</dbReference>
<dbReference type="GO" id="GO:0051287">
    <property type="term" value="F:NAD binding"/>
    <property type="evidence" value="ECO:0007669"/>
    <property type="project" value="InterPro"/>
</dbReference>
<dbReference type="GO" id="GO:0009098">
    <property type="term" value="P:L-leucine biosynthetic process"/>
    <property type="evidence" value="ECO:0007669"/>
    <property type="project" value="UniProtKB-UniPathway"/>
</dbReference>
<dbReference type="FunFam" id="3.40.718.10:FF:000006">
    <property type="entry name" value="3-isopropylmalate dehydrogenase"/>
    <property type="match status" value="1"/>
</dbReference>
<dbReference type="Gene3D" id="3.40.718.10">
    <property type="entry name" value="Isopropylmalate Dehydrogenase"/>
    <property type="match status" value="1"/>
</dbReference>
<dbReference type="InterPro" id="IPR019818">
    <property type="entry name" value="IsoCit/isopropylmalate_DH_CS"/>
</dbReference>
<dbReference type="InterPro" id="IPR024084">
    <property type="entry name" value="IsoPropMal-DH-like_dom"/>
</dbReference>
<dbReference type="InterPro" id="IPR004429">
    <property type="entry name" value="Isopropylmalate_DH"/>
</dbReference>
<dbReference type="NCBIfam" id="TIGR00169">
    <property type="entry name" value="leuB"/>
    <property type="match status" value="1"/>
</dbReference>
<dbReference type="PANTHER" id="PTHR42979">
    <property type="entry name" value="3-ISOPROPYLMALATE DEHYDROGENASE"/>
    <property type="match status" value="1"/>
</dbReference>
<dbReference type="PANTHER" id="PTHR42979:SF1">
    <property type="entry name" value="3-ISOPROPYLMALATE DEHYDROGENASE"/>
    <property type="match status" value="1"/>
</dbReference>
<dbReference type="Pfam" id="PF00180">
    <property type="entry name" value="Iso_dh"/>
    <property type="match status" value="1"/>
</dbReference>
<dbReference type="SMART" id="SM01329">
    <property type="entry name" value="Iso_dh"/>
    <property type="match status" value="1"/>
</dbReference>
<dbReference type="SUPFAM" id="SSF53659">
    <property type="entry name" value="Isocitrate/Isopropylmalate dehydrogenase-like"/>
    <property type="match status" value="1"/>
</dbReference>
<dbReference type="PROSITE" id="PS00470">
    <property type="entry name" value="IDH_IMDH"/>
    <property type="match status" value="1"/>
</dbReference>
<sequence length="362" mass="38514">MSKNIVVLPGDHAGQEIAQEAIKVLEAISEVSPEAKFNFQHHLIGGAAIDATGSPLPDDALAAAKKADAVLLGAVGGPKWGTGSVRPEQGLLKIRKELQLYANLRPCNFASESLLDLSPLKPQHAKGTDFVVVRELVGGIYFGERKEDEGDGVAWDSEKYTKPEVQRLTRMAAFLALQHNPPLPIWSLDKANVLASSRLWRKTVEETIKNEFPQLKLNHQLIDSAAMILVKSPTQLNGIVLTSNLFGDIISDEASVIPGSLGLLPSASLASLPDTNEAFGLYEPCHGSAPDLPKGKVNPIAMILSAAMMLKLSLNLSKEGEAVEKAVKQVLDSGVRTGDLGGSNSTSEVGDAIAKAVKEILA</sequence>
<proteinExistence type="inferred from homology"/>
<feature type="chain" id="PRO_0000083625" description="3-isopropylmalate dehydrogenase">
    <location>
        <begin position="1"/>
        <end position="362"/>
    </location>
</feature>
<feature type="binding site" evidence="1">
    <location>
        <begin position="77"/>
        <end position="88"/>
    </location>
    <ligand>
        <name>NAD(+)</name>
        <dbReference type="ChEBI" id="CHEBI:57540"/>
    </ligand>
</feature>
<feature type="binding site" evidence="1">
    <location>
        <position position="95"/>
    </location>
    <ligand>
        <name>substrate</name>
    </ligand>
</feature>
<feature type="binding site" evidence="1">
    <location>
        <position position="105"/>
    </location>
    <ligand>
        <name>substrate</name>
    </ligand>
</feature>
<feature type="binding site" evidence="1">
    <location>
        <position position="134"/>
    </location>
    <ligand>
        <name>substrate</name>
    </ligand>
</feature>
<feature type="binding site" evidence="1">
    <location>
        <position position="223"/>
    </location>
    <ligand>
        <name>Mg(2+)</name>
        <dbReference type="ChEBI" id="CHEBI:18420"/>
    </ligand>
</feature>
<feature type="binding site" evidence="1">
    <location>
        <position position="223"/>
    </location>
    <ligand>
        <name>substrate</name>
    </ligand>
</feature>
<feature type="binding site" evidence="1">
    <location>
        <position position="248"/>
    </location>
    <ligand>
        <name>Mg(2+)</name>
        <dbReference type="ChEBI" id="CHEBI:18420"/>
    </ligand>
</feature>
<feature type="binding site" evidence="1">
    <location>
        <position position="252"/>
    </location>
    <ligand>
        <name>Mg(2+)</name>
        <dbReference type="ChEBI" id="CHEBI:18420"/>
    </ligand>
</feature>
<feature type="binding site" evidence="1">
    <location>
        <begin position="287"/>
        <end position="298"/>
    </location>
    <ligand>
        <name>NAD(+)</name>
        <dbReference type="ChEBI" id="CHEBI:57540"/>
    </ligand>
</feature>
<feature type="site" description="Important for catalysis" evidence="1">
    <location>
        <position position="141"/>
    </location>
</feature>
<feature type="site" description="Important for catalysis" evidence="1">
    <location>
        <position position="190"/>
    </location>
</feature>
<evidence type="ECO:0000250" key="1"/>
<evidence type="ECO:0000305" key="2"/>
<comment type="function">
    <text>Catalyzes the oxidation of 3-carboxy-2-hydroxy-4-methylpentanoate (3-isopropylmalate) to 3-carboxy-4-methyl-2-oxopentanoate. The product decarboxylates to 4-methyl-2 oxopentanoate.</text>
</comment>
<comment type="catalytic activity">
    <reaction>
        <text>(2R,3S)-3-isopropylmalate + NAD(+) = 4-methyl-2-oxopentanoate + CO2 + NADH</text>
        <dbReference type="Rhea" id="RHEA:32271"/>
        <dbReference type="ChEBI" id="CHEBI:16526"/>
        <dbReference type="ChEBI" id="CHEBI:17865"/>
        <dbReference type="ChEBI" id="CHEBI:35121"/>
        <dbReference type="ChEBI" id="CHEBI:57540"/>
        <dbReference type="ChEBI" id="CHEBI:57945"/>
        <dbReference type="EC" id="1.1.1.85"/>
    </reaction>
</comment>
<comment type="cofactor">
    <cofactor evidence="1">
        <name>Mg(2+)</name>
        <dbReference type="ChEBI" id="CHEBI:18420"/>
    </cofactor>
    <cofactor evidence="1">
        <name>Mn(2+)</name>
        <dbReference type="ChEBI" id="CHEBI:29035"/>
    </cofactor>
    <text evidence="1">Binds 1 Mg(2+) or Mn(2+) ion per subunit.</text>
</comment>
<comment type="pathway">
    <text>Amino-acid biosynthesis; L-leucine biosynthesis; L-leucine from 3-methyl-2-oxobutanoate: step 3/4.</text>
</comment>
<comment type="subunit">
    <text evidence="1">Homodimer.</text>
</comment>
<comment type="subcellular location">
    <subcellularLocation>
        <location>Cytoplasm</location>
    </subcellularLocation>
</comment>
<comment type="similarity">
    <text evidence="2">Belongs to the isocitrate and isopropylmalate dehydrogenases family.</text>
</comment>